<sequence>MLDSKLLRTELDETAEKLARRGFKLDVETLRTLEEQRKSLQVITEDLQAQRNSRSKSIGQAKAKGDHEEADRIMADVATLGSELDDAKAGLAELQQQIESIALSVPNLPDESVPYGKDEDENVEVLRWGTPLTYDFEVRDHVALGELADGLDFASAVKISGSRFIVMKGQFARLHRALSQFMLDLHTEEHGYMEMYVPYLVNHDSLYGTGQLPKFGEDLFHTSPLTEQVSDVPLKMLSLIPTAEVPVTNMVRDTITEEADLPLKMTAHTPCFRSEAGSYGRDTRGLIRMHQFDKVELVQITKPEDSMAALEELTGHAEKVLQLLELPYRKVILCTGDMGFGSRKTYDLEVWVPAQETYREISSCSNMWDFQARRMQARFRRQGEKKPELVHTLNGSGLAVGRTMVAILENFQQADGKIAIPEVLRKYMNGVEFIG</sequence>
<accession>B6ENN5</accession>
<feature type="chain" id="PRO_1000098029" description="Serine--tRNA ligase">
    <location>
        <begin position="1"/>
        <end position="435"/>
    </location>
</feature>
<feature type="binding site" evidence="1">
    <location>
        <begin position="242"/>
        <end position="244"/>
    </location>
    <ligand>
        <name>L-serine</name>
        <dbReference type="ChEBI" id="CHEBI:33384"/>
    </ligand>
</feature>
<feature type="binding site" evidence="1">
    <location>
        <begin position="273"/>
        <end position="275"/>
    </location>
    <ligand>
        <name>ATP</name>
        <dbReference type="ChEBI" id="CHEBI:30616"/>
    </ligand>
</feature>
<feature type="binding site" evidence="1">
    <location>
        <position position="296"/>
    </location>
    <ligand>
        <name>L-serine</name>
        <dbReference type="ChEBI" id="CHEBI:33384"/>
    </ligand>
</feature>
<feature type="binding site" evidence="1">
    <location>
        <begin position="360"/>
        <end position="363"/>
    </location>
    <ligand>
        <name>ATP</name>
        <dbReference type="ChEBI" id="CHEBI:30616"/>
    </ligand>
</feature>
<feature type="binding site" evidence="1">
    <location>
        <position position="396"/>
    </location>
    <ligand>
        <name>L-serine</name>
        <dbReference type="ChEBI" id="CHEBI:33384"/>
    </ligand>
</feature>
<name>SYS_ALISL</name>
<gene>
    <name evidence="1" type="primary">serS</name>
    <name type="ordered locus">VSAL_I1844</name>
</gene>
<comment type="function">
    <text evidence="1">Catalyzes the attachment of serine to tRNA(Ser). Is also able to aminoacylate tRNA(Sec) with serine, to form the misacylated tRNA L-seryl-tRNA(Sec), which will be further converted into selenocysteinyl-tRNA(Sec).</text>
</comment>
<comment type="catalytic activity">
    <reaction evidence="1">
        <text>tRNA(Ser) + L-serine + ATP = L-seryl-tRNA(Ser) + AMP + diphosphate + H(+)</text>
        <dbReference type="Rhea" id="RHEA:12292"/>
        <dbReference type="Rhea" id="RHEA-COMP:9669"/>
        <dbReference type="Rhea" id="RHEA-COMP:9703"/>
        <dbReference type="ChEBI" id="CHEBI:15378"/>
        <dbReference type="ChEBI" id="CHEBI:30616"/>
        <dbReference type="ChEBI" id="CHEBI:33019"/>
        <dbReference type="ChEBI" id="CHEBI:33384"/>
        <dbReference type="ChEBI" id="CHEBI:78442"/>
        <dbReference type="ChEBI" id="CHEBI:78533"/>
        <dbReference type="ChEBI" id="CHEBI:456215"/>
        <dbReference type="EC" id="6.1.1.11"/>
    </reaction>
</comment>
<comment type="catalytic activity">
    <reaction evidence="1">
        <text>tRNA(Sec) + L-serine + ATP = L-seryl-tRNA(Sec) + AMP + diphosphate + H(+)</text>
        <dbReference type="Rhea" id="RHEA:42580"/>
        <dbReference type="Rhea" id="RHEA-COMP:9742"/>
        <dbReference type="Rhea" id="RHEA-COMP:10128"/>
        <dbReference type="ChEBI" id="CHEBI:15378"/>
        <dbReference type="ChEBI" id="CHEBI:30616"/>
        <dbReference type="ChEBI" id="CHEBI:33019"/>
        <dbReference type="ChEBI" id="CHEBI:33384"/>
        <dbReference type="ChEBI" id="CHEBI:78442"/>
        <dbReference type="ChEBI" id="CHEBI:78533"/>
        <dbReference type="ChEBI" id="CHEBI:456215"/>
        <dbReference type="EC" id="6.1.1.11"/>
    </reaction>
</comment>
<comment type="pathway">
    <text evidence="1">Aminoacyl-tRNA biosynthesis; selenocysteinyl-tRNA(Sec) biosynthesis; L-seryl-tRNA(Sec) from L-serine and tRNA(Sec): step 1/1.</text>
</comment>
<comment type="subunit">
    <text evidence="1">Homodimer. The tRNA molecule binds across the dimer.</text>
</comment>
<comment type="subcellular location">
    <subcellularLocation>
        <location evidence="1">Cytoplasm</location>
    </subcellularLocation>
</comment>
<comment type="domain">
    <text evidence="1">Consists of two distinct domains, a catalytic core and a N-terminal extension that is involved in tRNA binding.</text>
</comment>
<comment type="similarity">
    <text evidence="1">Belongs to the class-II aminoacyl-tRNA synthetase family. Type-1 seryl-tRNA synthetase subfamily.</text>
</comment>
<reference key="1">
    <citation type="journal article" date="2008" name="BMC Genomics">
        <title>The genome sequence of the fish pathogen Aliivibrio salmonicida strain LFI1238 shows extensive evidence of gene decay.</title>
        <authorList>
            <person name="Hjerde E."/>
            <person name="Lorentzen M.S."/>
            <person name="Holden M.T."/>
            <person name="Seeger K."/>
            <person name="Paulsen S."/>
            <person name="Bason N."/>
            <person name="Churcher C."/>
            <person name="Harris D."/>
            <person name="Norbertczak H."/>
            <person name="Quail M.A."/>
            <person name="Sanders S."/>
            <person name="Thurston S."/>
            <person name="Parkhill J."/>
            <person name="Willassen N.P."/>
            <person name="Thomson N.R."/>
        </authorList>
    </citation>
    <scope>NUCLEOTIDE SEQUENCE [LARGE SCALE GENOMIC DNA]</scope>
    <source>
        <strain>LFI1238</strain>
    </source>
</reference>
<evidence type="ECO:0000255" key="1">
    <source>
        <dbReference type="HAMAP-Rule" id="MF_00176"/>
    </source>
</evidence>
<proteinExistence type="inferred from homology"/>
<protein>
    <recommendedName>
        <fullName evidence="1">Serine--tRNA ligase</fullName>
        <ecNumber evidence="1">6.1.1.11</ecNumber>
    </recommendedName>
    <alternativeName>
        <fullName evidence="1">Seryl-tRNA synthetase</fullName>
        <shortName evidence="1">SerRS</shortName>
    </alternativeName>
    <alternativeName>
        <fullName evidence="1">Seryl-tRNA(Ser/Sec) synthetase</fullName>
    </alternativeName>
</protein>
<dbReference type="EC" id="6.1.1.11" evidence="1"/>
<dbReference type="EMBL" id="FM178379">
    <property type="protein sequence ID" value="CAQ79529.1"/>
    <property type="molecule type" value="Genomic_DNA"/>
</dbReference>
<dbReference type="RefSeq" id="WP_012550419.1">
    <property type="nucleotide sequence ID" value="NC_011312.1"/>
</dbReference>
<dbReference type="SMR" id="B6ENN5"/>
<dbReference type="KEGG" id="vsa:VSAL_I1844"/>
<dbReference type="eggNOG" id="COG0172">
    <property type="taxonomic scope" value="Bacteria"/>
</dbReference>
<dbReference type="HOGENOM" id="CLU_023797_1_1_6"/>
<dbReference type="UniPathway" id="UPA00906">
    <property type="reaction ID" value="UER00895"/>
</dbReference>
<dbReference type="Proteomes" id="UP000001730">
    <property type="component" value="Chromosome 1"/>
</dbReference>
<dbReference type="GO" id="GO:0005737">
    <property type="term" value="C:cytoplasm"/>
    <property type="evidence" value="ECO:0007669"/>
    <property type="project" value="UniProtKB-SubCell"/>
</dbReference>
<dbReference type="GO" id="GO:0005524">
    <property type="term" value="F:ATP binding"/>
    <property type="evidence" value="ECO:0007669"/>
    <property type="project" value="UniProtKB-UniRule"/>
</dbReference>
<dbReference type="GO" id="GO:0004828">
    <property type="term" value="F:serine-tRNA ligase activity"/>
    <property type="evidence" value="ECO:0007669"/>
    <property type="project" value="UniProtKB-UniRule"/>
</dbReference>
<dbReference type="GO" id="GO:0016260">
    <property type="term" value="P:selenocysteine biosynthetic process"/>
    <property type="evidence" value="ECO:0007669"/>
    <property type="project" value="UniProtKB-UniRule"/>
</dbReference>
<dbReference type="GO" id="GO:0006434">
    <property type="term" value="P:seryl-tRNA aminoacylation"/>
    <property type="evidence" value="ECO:0007669"/>
    <property type="project" value="UniProtKB-UniRule"/>
</dbReference>
<dbReference type="CDD" id="cd00770">
    <property type="entry name" value="SerRS_core"/>
    <property type="match status" value="1"/>
</dbReference>
<dbReference type="FunFam" id="3.30.930.10:FF:000018">
    <property type="entry name" value="Serine--tRNA ligase"/>
    <property type="match status" value="1"/>
</dbReference>
<dbReference type="Gene3D" id="3.30.930.10">
    <property type="entry name" value="Bira Bifunctional Protein, Domain 2"/>
    <property type="match status" value="1"/>
</dbReference>
<dbReference type="Gene3D" id="1.10.287.40">
    <property type="entry name" value="Serine-tRNA synthetase, tRNA binding domain"/>
    <property type="match status" value="1"/>
</dbReference>
<dbReference type="HAMAP" id="MF_00176">
    <property type="entry name" value="Ser_tRNA_synth_type1"/>
    <property type="match status" value="1"/>
</dbReference>
<dbReference type="InterPro" id="IPR002314">
    <property type="entry name" value="aa-tRNA-synt_IIb"/>
</dbReference>
<dbReference type="InterPro" id="IPR006195">
    <property type="entry name" value="aa-tRNA-synth_II"/>
</dbReference>
<dbReference type="InterPro" id="IPR045864">
    <property type="entry name" value="aa-tRNA-synth_II/BPL/LPL"/>
</dbReference>
<dbReference type="InterPro" id="IPR002317">
    <property type="entry name" value="Ser-tRNA-ligase_type_1"/>
</dbReference>
<dbReference type="InterPro" id="IPR015866">
    <property type="entry name" value="Ser-tRNA-synth_1_N"/>
</dbReference>
<dbReference type="InterPro" id="IPR042103">
    <property type="entry name" value="SerRS_1_N_sf"/>
</dbReference>
<dbReference type="InterPro" id="IPR033729">
    <property type="entry name" value="SerRS_core"/>
</dbReference>
<dbReference type="InterPro" id="IPR010978">
    <property type="entry name" value="tRNA-bd_arm"/>
</dbReference>
<dbReference type="NCBIfam" id="TIGR00414">
    <property type="entry name" value="serS"/>
    <property type="match status" value="1"/>
</dbReference>
<dbReference type="PANTHER" id="PTHR43697:SF1">
    <property type="entry name" value="SERINE--TRNA LIGASE"/>
    <property type="match status" value="1"/>
</dbReference>
<dbReference type="PANTHER" id="PTHR43697">
    <property type="entry name" value="SERYL-TRNA SYNTHETASE"/>
    <property type="match status" value="1"/>
</dbReference>
<dbReference type="Pfam" id="PF02403">
    <property type="entry name" value="Seryl_tRNA_N"/>
    <property type="match status" value="1"/>
</dbReference>
<dbReference type="Pfam" id="PF00587">
    <property type="entry name" value="tRNA-synt_2b"/>
    <property type="match status" value="1"/>
</dbReference>
<dbReference type="PIRSF" id="PIRSF001529">
    <property type="entry name" value="Ser-tRNA-synth_IIa"/>
    <property type="match status" value="1"/>
</dbReference>
<dbReference type="PRINTS" id="PR00981">
    <property type="entry name" value="TRNASYNTHSER"/>
</dbReference>
<dbReference type="SUPFAM" id="SSF55681">
    <property type="entry name" value="Class II aaRS and biotin synthetases"/>
    <property type="match status" value="1"/>
</dbReference>
<dbReference type="SUPFAM" id="SSF46589">
    <property type="entry name" value="tRNA-binding arm"/>
    <property type="match status" value="1"/>
</dbReference>
<dbReference type="PROSITE" id="PS50862">
    <property type="entry name" value="AA_TRNA_LIGASE_II"/>
    <property type="match status" value="1"/>
</dbReference>
<keyword id="KW-0030">Aminoacyl-tRNA synthetase</keyword>
<keyword id="KW-0067">ATP-binding</keyword>
<keyword id="KW-0963">Cytoplasm</keyword>
<keyword id="KW-0436">Ligase</keyword>
<keyword id="KW-0547">Nucleotide-binding</keyword>
<keyword id="KW-0648">Protein biosynthesis</keyword>
<organism>
    <name type="scientific">Aliivibrio salmonicida (strain LFI1238)</name>
    <name type="common">Vibrio salmonicida (strain LFI1238)</name>
    <dbReference type="NCBI Taxonomy" id="316275"/>
    <lineage>
        <taxon>Bacteria</taxon>
        <taxon>Pseudomonadati</taxon>
        <taxon>Pseudomonadota</taxon>
        <taxon>Gammaproteobacteria</taxon>
        <taxon>Vibrionales</taxon>
        <taxon>Vibrionaceae</taxon>
        <taxon>Aliivibrio</taxon>
    </lineage>
</organism>